<comment type="function">
    <text evidence="1">Catalyzes the addition and repair of the essential 3'-terminal CCA sequence in tRNAs without using a nucleic acid template. Adds these three nucleotides in the order of C, C, and A to the tRNA nucleotide-73, using CTP and ATP as substrates and producing inorganic pyrophosphate. tRNA 3'-terminal CCA addition is required both for tRNA processing and repair. Also involved in tRNA surveillance by mediating tandem CCA addition to generate a CCACCA at the 3' terminus of unstable tRNAs. While stable tRNAs receive only 3'-terminal CCA, unstable tRNAs are marked with CCACCA and rapidly degraded.</text>
</comment>
<comment type="catalytic activity">
    <reaction evidence="1">
        <text>a tRNA precursor + 2 CTP + ATP = a tRNA with a 3' CCA end + 3 diphosphate</text>
        <dbReference type="Rhea" id="RHEA:14433"/>
        <dbReference type="Rhea" id="RHEA-COMP:10465"/>
        <dbReference type="Rhea" id="RHEA-COMP:10468"/>
        <dbReference type="ChEBI" id="CHEBI:30616"/>
        <dbReference type="ChEBI" id="CHEBI:33019"/>
        <dbReference type="ChEBI" id="CHEBI:37563"/>
        <dbReference type="ChEBI" id="CHEBI:74896"/>
        <dbReference type="ChEBI" id="CHEBI:83071"/>
        <dbReference type="EC" id="2.7.7.72"/>
    </reaction>
</comment>
<comment type="catalytic activity">
    <reaction evidence="1">
        <text>a tRNA with a 3' CCA end + 2 CTP + ATP = a tRNA with a 3' CCACCA end + 3 diphosphate</text>
        <dbReference type="Rhea" id="RHEA:76235"/>
        <dbReference type="Rhea" id="RHEA-COMP:10468"/>
        <dbReference type="Rhea" id="RHEA-COMP:18655"/>
        <dbReference type="ChEBI" id="CHEBI:30616"/>
        <dbReference type="ChEBI" id="CHEBI:33019"/>
        <dbReference type="ChEBI" id="CHEBI:37563"/>
        <dbReference type="ChEBI" id="CHEBI:83071"/>
        <dbReference type="ChEBI" id="CHEBI:195187"/>
    </reaction>
    <physiologicalReaction direction="left-to-right" evidence="1">
        <dbReference type="Rhea" id="RHEA:76236"/>
    </physiologicalReaction>
</comment>
<comment type="cofactor">
    <cofactor evidence="1">
        <name>Mg(2+)</name>
        <dbReference type="ChEBI" id="CHEBI:18420"/>
    </cofactor>
    <text evidence="1">Magnesium is required for nucleotidyltransferase activity.</text>
</comment>
<comment type="cofactor">
    <cofactor evidence="1">
        <name>Ni(2+)</name>
        <dbReference type="ChEBI" id="CHEBI:49786"/>
    </cofactor>
    <text evidence="1">Nickel for phosphatase activity.</text>
</comment>
<comment type="subunit">
    <text evidence="1">Monomer. Can also form homodimers and oligomers.</text>
</comment>
<comment type="domain">
    <text evidence="1">Comprises two domains: an N-terminal domain containing the nucleotidyltransferase activity and a C-terminal HD domain associated with both phosphodiesterase and phosphatase activities.</text>
</comment>
<comment type="miscellaneous">
    <text evidence="1">A single active site specifically recognizes both ATP and CTP and is responsible for their addition.</text>
</comment>
<comment type="similarity">
    <text evidence="1">Belongs to the tRNA nucleotidyltransferase/poly(A) polymerase family. Bacterial CCA-adding enzyme type 1 subfamily.</text>
</comment>
<keyword id="KW-0067">ATP-binding</keyword>
<keyword id="KW-0378">Hydrolase</keyword>
<keyword id="KW-0460">Magnesium</keyword>
<keyword id="KW-0479">Metal-binding</keyword>
<keyword id="KW-0511">Multifunctional enzyme</keyword>
<keyword id="KW-0533">Nickel</keyword>
<keyword id="KW-0547">Nucleotide-binding</keyword>
<keyword id="KW-0548">Nucleotidyltransferase</keyword>
<keyword id="KW-0692">RNA repair</keyword>
<keyword id="KW-0694">RNA-binding</keyword>
<keyword id="KW-0808">Transferase</keyword>
<keyword id="KW-0819">tRNA processing</keyword>
<accession>A6UZ87</accession>
<reference key="1">
    <citation type="submission" date="2007-06" db="EMBL/GenBank/DDBJ databases">
        <authorList>
            <person name="Dodson R.J."/>
            <person name="Harkins D."/>
            <person name="Paulsen I.T."/>
        </authorList>
    </citation>
    <scope>NUCLEOTIDE SEQUENCE [LARGE SCALE GENOMIC DNA]</scope>
    <source>
        <strain>DSM 24068 / PA7</strain>
    </source>
</reference>
<feature type="chain" id="PRO_1000054281" description="Multifunctional CCA protein">
    <location>
        <begin position="1"/>
        <end position="410"/>
    </location>
</feature>
<feature type="domain" description="HD" evidence="1">
    <location>
        <begin position="228"/>
        <end position="329"/>
    </location>
</feature>
<feature type="binding site" evidence="1">
    <location>
        <position position="8"/>
    </location>
    <ligand>
        <name>ATP</name>
        <dbReference type="ChEBI" id="CHEBI:30616"/>
    </ligand>
</feature>
<feature type="binding site" evidence="1">
    <location>
        <position position="8"/>
    </location>
    <ligand>
        <name>CTP</name>
        <dbReference type="ChEBI" id="CHEBI:37563"/>
    </ligand>
</feature>
<feature type="binding site" evidence="1">
    <location>
        <position position="11"/>
    </location>
    <ligand>
        <name>ATP</name>
        <dbReference type="ChEBI" id="CHEBI:30616"/>
    </ligand>
</feature>
<feature type="binding site" evidence="1">
    <location>
        <position position="11"/>
    </location>
    <ligand>
        <name>CTP</name>
        <dbReference type="ChEBI" id="CHEBI:37563"/>
    </ligand>
</feature>
<feature type="binding site" evidence="1">
    <location>
        <position position="21"/>
    </location>
    <ligand>
        <name>Mg(2+)</name>
        <dbReference type="ChEBI" id="CHEBI:18420"/>
    </ligand>
</feature>
<feature type="binding site" evidence="1">
    <location>
        <position position="23"/>
    </location>
    <ligand>
        <name>Mg(2+)</name>
        <dbReference type="ChEBI" id="CHEBI:18420"/>
    </ligand>
</feature>
<feature type="binding site" evidence="1">
    <location>
        <position position="91"/>
    </location>
    <ligand>
        <name>ATP</name>
        <dbReference type="ChEBI" id="CHEBI:30616"/>
    </ligand>
</feature>
<feature type="binding site" evidence="1">
    <location>
        <position position="91"/>
    </location>
    <ligand>
        <name>CTP</name>
        <dbReference type="ChEBI" id="CHEBI:37563"/>
    </ligand>
</feature>
<feature type="binding site" evidence="1">
    <location>
        <position position="137"/>
    </location>
    <ligand>
        <name>ATP</name>
        <dbReference type="ChEBI" id="CHEBI:30616"/>
    </ligand>
</feature>
<feature type="binding site" evidence="1">
    <location>
        <position position="137"/>
    </location>
    <ligand>
        <name>CTP</name>
        <dbReference type="ChEBI" id="CHEBI:37563"/>
    </ligand>
</feature>
<feature type="binding site" evidence="1">
    <location>
        <position position="140"/>
    </location>
    <ligand>
        <name>ATP</name>
        <dbReference type="ChEBI" id="CHEBI:30616"/>
    </ligand>
</feature>
<feature type="binding site" evidence="1">
    <location>
        <position position="140"/>
    </location>
    <ligand>
        <name>CTP</name>
        <dbReference type="ChEBI" id="CHEBI:37563"/>
    </ligand>
</feature>
<organism>
    <name type="scientific">Pseudomonas paraeruginosa (strain DSM 24068 / PA7)</name>
    <name type="common">Pseudomonas aeruginosa (strain PA7)</name>
    <dbReference type="NCBI Taxonomy" id="381754"/>
    <lineage>
        <taxon>Bacteria</taxon>
        <taxon>Pseudomonadati</taxon>
        <taxon>Pseudomonadota</taxon>
        <taxon>Gammaproteobacteria</taxon>
        <taxon>Pseudomonadales</taxon>
        <taxon>Pseudomonadaceae</taxon>
        <taxon>Pseudomonas</taxon>
        <taxon>Pseudomonas paraeruginosa</taxon>
    </lineage>
</organism>
<dbReference type="EC" id="2.7.7.72" evidence="1"/>
<dbReference type="EC" id="3.1.3.-" evidence="1"/>
<dbReference type="EC" id="3.1.4.-" evidence="1"/>
<dbReference type="EMBL" id="CP000744">
    <property type="protein sequence ID" value="ABR82568.1"/>
    <property type="molecule type" value="Genomic_DNA"/>
</dbReference>
<dbReference type="RefSeq" id="WP_012074168.1">
    <property type="nucleotide sequence ID" value="NC_009656.1"/>
</dbReference>
<dbReference type="SMR" id="A6UZ87"/>
<dbReference type="GeneID" id="77219104"/>
<dbReference type="KEGG" id="pap:PSPA7_0726"/>
<dbReference type="HOGENOM" id="CLU_015961_1_1_6"/>
<dbReference type="Proteomes" id="UP000001582">
    <property type="component" value="Chromosome"/>
</dbReference>
<dbReference type="GO" id="GO:0005524">
    <property type="term" value="F:ATP binding"/>
    <property type="evidence" value="ECO:0007669"/>
    <property type="project" value="UniProtKB-UniRule"/>
</dbReference>
<dbReference type="GO" id="GO:0004810">
    <property type="term" value="F:CCA tRNA nucleotidyltransferase activity"/>
    <property type="evidence" value="ECO:0007669"/>
    <property type="project" value="UniProtKB-UniRule"/>
</dbReference>
<dbReference type="GO" id="GO:0004112">
    <property type="term" value="F:cyclic-nucleotide phosphodiesterase activity"/>
    <property type="evidence" value="ECO:0007669"/>
    <property type="project" value="UniProtKB-UniRule"/>
</dbReference>
<dbReference type="GO" id="GO:0000287">
    <property type="term" value="F:magnesium ion binding"/>
    <property type="evidence" value="ECO:0007669"/>
    <property type="project" value="UniProtKB-UniRule"/>
</dbReference>
<dbReference type="GO" id="GO:0016791">
    <property type="term" value="F:phosphatase activity"/>
    <property type="evidence" value="ECO:0007669"/>
    <property type="project" value="UniProtKB-UniRule"/>
</dbReference>
<dbReference type="GO" id="GO:0000049">
    <property type="term" value="F:tRNA binding"/>
    <property type="evidence" value="ECO:0007669"/>
    <property type="project" value="UniProtKB-UniRule"/>
</dbReference>
<dbReference type="GO" id="GO:0042245">
    <property type="term" value="P:RNA repair"/>
    <property type="evidence" value="ECO:0007669"/>
    <property type="project" value="UniProtKB-KW"/>
</dbReference>
<dbReference type="GO" id="GO:0001680">
    <property type="term" value="P:tRNA 3'-terminal CCA addition"/>
    <property type="evidence" value="ECO:0007669"/>
    <property type="project" value="UniProtKB-UniRule"/>
</dbReference>
<dbReference type="CDD" id="cd00077">
    <property type="entry name" value="HDc"/>
    <property type="match status" value="1"/>
</dbReference>
<dbReference type="CDD" id="cd05398">
    <property type="entry name" value="NT_ClassII-CCAase"/>
    <property type="match status" value="1"/>
</dbReference>
<dbReference type="FunFam" id="1.10.3090.10:FF:000001">
    <property type="entry name" value="Multifunctional CCA protein"/>
    <property type="match status" value="1"/>
</dbReference>
<dbReference type="FunFam" id="3.30.460.10:FF:000016">
    <property type="entry name" value="Multifunctional CCA protein"/>
    <property type="match status" value="1"/>
</dbReference>
<dbReference type="Gene3D" id="3.30.460.10">
    <property type="entry name" value="Beta Polymerase, domain 2"/>
    <property type="match status" value="1"/>
</dbReference>
<dbReference type="Gene3D" id="1.10.3090.10">
    <property type="entry name" value="cca-adding enzyme, domain 2"/>
    <property type="match status" value="1"/>
</dbReference>
<dbReference type="HAMAP" id="MF_01261">
    <property type="entry name" value="CCA_bact_type1"/>
    <property type="match status" value="1"/>
</dbReference>
<dbReference type="HAMAP" id="MF_01262">
    <property type="entry name" value="CCA_bact_type2"/>
    <property type="match status" value="1"/>
</dbReference>
<dbReference type="InterPro" id="IPR012006">
    <property type="entry name" value="CCA_bact"/>
</dbReference>
<dbReference type="InterPro" id="IPR003607">
    <property type="entry name" value="HD/PDEase_dom"/>
</dbReference>
<dbReference type="InterPro" id="IPR006674">
    <property type="entry name" value="HD_domain"/>
</dbReference>
<dbReference type="InterPro" id="IPR043519">
    <property type="entry name" value="NT_sf"/>
</dbReference>
<dbReference type="InterPro" id="IPR002646">
    <property type="entry name" value="PolA_pol_head_dom"/>
</dbReference>
<dbReference type="InterPro" id="IPR032828">
    <property type="entry name" value="PolyA_RNA-bd"/>
</dbReference>
<dbReference type="InterPro" id="IPR050124">
    <property type="entry name" value="tRNA_CCA-adding_enzyme"/>
</dbReference>
<dbReference type="NCBIfam" id="NF008137">
    <property type="entry name" value="PRK10885.1"/>
    <property type="match status" value="1"/>
</dbReference>
<dbReference type="PANTHER" id="PTHR47545">
    <property type="entry name" value="MULTIFUNCTIONAL CCA PROTEIN"/>
    <property type="match status" value="1"/>
</dbReference>
<dbReference type="PANTHER" id="PTHR47545:SF1">
    <property type="entry name" value="MULTIFUNCTIONAL CCA PROTEIN"/>
    <property type="match status" value="1"/>
</dbReference>
<dbReference type="Pfam" id="PF01966">
    <property type="entry name" value="HD"/>
    <property type="match status" value="1"/>
</dbReference>
<dbReference type="Pfam" id="PF01743">
    <property type="entry name" value="PolyA_pol"/>
    <property type="match status" value="1"/>
</dbReference>
<dbReference type="Pfam" id="PF12627">
    <property type="entry name" value="PolyA_pol_RNAbd"/>
    <property type="match status" value="1"/>
</dbReference>
<dbReference type="PIRSF" id="PIRSF000813">
    <property type="entry name" value="CCA_bact"/>
    <property type="match status" value="1"/>
</dbReference>
<dbReference type="SUPFAM" id="SSF81301">
    <property type="entry name" value="Nucleotidyltransferase"/>
    <property type="match status" value="1"/>
</dbReference>
<dbReference type="SUPFAM" id="SSF81891">
    <property type="entry name" value="Poly A polymerase C-terminal region-like"/>
    <property type="match status" value="1"/>
</dbReference>
<dbReference type="PROSITE" id="PS51831">
    <property type="entry name" value="HD"/>
    <property type="match status" value="1"/>
</dbReference>
<evidence type="ECO:0000255" key="1">
    <source>
        <dbReference type="HAMAP-Rule" id="MF_01261"/>
    </source>
</evidence>
<gene>
    <name evidence="1" type="primary">cca</name>
    <name type="ordered locus">PSPA7_0726</name>
</gene>
<sequence length="410" mass="45718">MQIYKVGGAVRDRLLGRPVTDIDWVVVGASSEEMLARGYRPVGADFPVFLHPQSGEEYALARTERKSGRGYGGFTFHASPDVTLEEDLTRRDLTINAMAEDEQGRVIDPYGGQADLEARLLRHVSPAFAEDPLRVLRVARFAARYAGLGFRVAAETLALMRQLAGSGELQALTPERSWKEISRALMEPNPEVFVQVLHDCGALAELMPEVEALFGVPQPAAHHPEIDTGVHVLSVLQQCARHHQPLTVRWACLLHDLGKGLTREADWPRHIAHETRGLPLIDAINRRFRVPRDCQELARLVGEYHTHAHRALELRPTTLLELLQSFDVYRRPQRFEEFVAASEMDARGRHGLEQRDYPQAAYLLGAAQAARAVSVKPLVEKGLKGAELGEALKRARLAALKAYKEERGKA</sequence>
<name>CCA_PSEP7</name>
<protein>
    <recommendedName>
        <fullName evidence="1">Multifunctional CCA protein</fullName>
    </recommendedName>
    <domain>
        <recommendedName>
            <fullName evidence="1">CCA-adding enzyme</fullName>
            <ecNumber evidence="1">2.7.7.72</ecNumber>
        </recommendedName>
        <alternativeName>
            <fullName evidence="1">CCA tRNA nucleotidyltransferase</fullName>
        </alternativeName>
        <alternativeName>
            <fullName evidence="1">tRNA CCA-pyrophosphorylase</fullName>
        </alternativeName>
        <alternativeName>
            <fullName evidence="1">tRNA adenylyl-/cytidylyl-transferase</fullName>
        </alternativeName>
        <alternativeName>
            <fullName evidence="1">tRNA nucleotidyltransferase</fullName>
        </alternativeName>
        <alternativeName>
            <fullName evidence="1">tRNA-NT</fullName>
        </alternativeName>
    </domain>
    <domain>
        <recommendedName>
            <fullName evidence="1">2'-nucleotidase</fullName>
            <ecNumber evidence="1">3.1.3.-</ecNumber>
        </recommendedName>
    </domain>
    <domain>
        <recommendedName>
            <fullName evidence="1">2',3'-cyclic phosphodiesterase</fullName>
            <ecNumber evidence="1">3.1.4.-</ecNumber>
        </recommendedName>
    </domain>
    <domain>
        <recommendedName>
            <fullName evidence="1">Phosphatase</fullName>
            <ecNumber evidence="1">3.1.3.-</ecNumber>
        </recommendedName>
    </domain>
</protein>
<proteinExistence type="inferred from homology"/>